<dbReference type="EC" id="1.17.1.8" evidence="1"/>
<dbReference type="EMBL" id="CP000527">
    <property type="protein sequence ID" value="ABM28542.1"/>
    <property type="molecule type" value="Genomic_DNA"/>
</dbReference>
<dbReference type="RefSeq" id="WP_010938900.1">
    <property type="nucleotide sequence ID" value="NC_008751.1"/>
</dbReference>
<dbReference type="SMR" id="A1VDM6"/>
<dbReference type="KEGG" id="dvl:Dvul_1525"/>
<dbReference type="HOGENOM" id="CLU_047479_2_1_7"/>
<dbReference type="UniPathway" id="UPA00034">
    <property type="reaction ID" value="UER00018"/>
</dbReference>
<dbReference type="Proteomes" id="UP000009173">
    <property type="component" value="Chromosome"/>
</dbReference>
<dbReference type="GO" id="GO:0005737">
    <property type="term" value="C:cytoplasm"/>
    <property type="evidence" value="ECO:0007669"/>
    <property type="project" value="UniProtKB-SubCell"/>
</dbReference>
<dbReference type="GO" id="GO:0008839">
    <property type="term" value="F:4-hydroxy-tetrahydrodipicolinate reductase"/>
    <property type="evidence" value="ECO:0007669"/>
    <property type="project" value="UniProtKB-EC"/>
</dbReference>
<dbReference type="GO" id="GO:0051287">
    <property type="term" value="F:NAD binding"/>
    <property type="evidence" value="ECO:0007669"/>
    <property type="project" value="UniProtKB-UniRule"/>
</dbReference>
<dbReference type="GO" id="GO:0050661">
    <property type="term" value="F:NADP binding"/>
    <property type="evidence" value="ECO:0007669"/>
    <property type="project" value="UniProtKB-UniRule"/>
</dbReference>
<dbReference type="GO" id="GO:0016726">
    <property type="term" value="F:oxidoreductase activity, acting on CH or CH2 groups, NAD or NADP as acceptor"/>
    <property type="evidence" value="ECO:0007669"/>
    <property type="project" value="UniProtKB-UniRule"/>
</dbReference>
<dbReference type="GO" id="GO:0019877">
    <property type="term" value="P:diaminopimelate biosynthetic process"/>
    <property type="evidence" value="ECO:0007669"/>
    <property type="project" value="UniProtKB-UniRule"/>
</dbReference>
<dbReference type="GO" id="GO:0009089">
    <property type="term" value="P:lysine biosynthetic process via diaminopimelate"/>
    <property type="evidence" value="ECO:0007669"/>
    <property type="project" value="UniProtKB-UniRule"/>
</dbReference>
<dbReference type="CDD" id="cd02274">
    <property type="entry name" value="DHDPR_N"/>
    <property type="match status" value="1"/>
</dbReference>
<dbReference type="FunFam" id="3.30.360.10:FF:000004">
    <property type="entry name" value="4-hydroxy-tetrahydrodipicolinate reductase"/>
    <property type="match status" value="1"/>
</dbReference>
<dbReference type="Gene3D" id="3.30.360.10">
    <property type="entry name" value="Dihydrodipicolinate Reductase, domain 2"/>
    <property type="match status" value="1"/>
</dbReference>
<dbReference type="Gene3D" id="3.40.50.720">
    <property type="entry name" value="NAD(P)-binding Rossmann-like Domain"/>
    <property type="match status" value="1"/>
</dbReference>
<dbReference type="HAMAP" id="MF_00102">
    <property type="entry name" value="DapB"/>
    <property type="match status" value="1"/>
</dbReference>
<dbReference type="InterPro" id="IPR022663">
    <property type="entry name" value="DapB_C"/>
</dbReference>
<dbReference type="InterPro" id="IPR000846">
    <property type="entry name" value="DapB_N"/>
</dbReference>
<dbReference type="InterPro" id="IPR023940">
    <property type="entry name" value="DHDPR_bac"/>
</dbReference>
<dbReference type="InterPro" id="IPR036291">
    <property type="entry name" value="NAD(P)-bd_dom_sf"/>
</dbReference>
<dbReference type="NCBIfam" id="TIGR00036">
    <property type="entry name" value="dapB"/>
    <property type="match status" value="1"/>
</dbReference>
<dbReference type="PANTHER" id="PTHR20836:SF0">
    <property type="entry name" value="4-HYDROXY-TETRAHYDRODIPICOLINATE REDUCTASE 1, CHLOROPLASTIC-RELATED"/>
    <property type="match status" value="1"/>
</dbReference>
<dbReference type="PANTHER" id="PTHR20836">
    <property type="entry name" value="DIHYDRODIPICOLINATE REDUCTASE"/>
    <property type="match status" value="1"/>
</dbReference>
<dbReference type="Pfam" id="PF05173">
    <property type="entry name" value="DapB_C"/>
    <property type="match status" value="1"/>
</dbReference>
<dbReference type="Pfam" id="PF01113">
    <property type="entry name" value="DapB_N"/>
    <property type="match status" value="1"/>
</dbReference>
<dbReference type="PIRSF" id="PIRSF000161">
    <property type="entry name" value="DHPR"/>
    <property type="match status" value="1"/>
</dbReference>
<dbReference type="SUPFAM" id="SSF55347">
    <property type="entry name" value="Glyceraldehyde-3-phosphate dehydrogenase-like, C-terminal domain"/>
    <property type="match status" value="1"/>
</dbReference>
<dbReference type="SUPFAM" id="SSF51735">
    <property type="entry name" value="NAD(P)-binding Rossmann-fold domains"/>
    <property type="match status" value="1"/>
</dbReference>
<sequence length="259" mass="27984">MSTPIIVMGAGGRMGSTICRLVQEEPQLCLAAVLERPDRASGVARDGCIAGSDPDVVFPQVPGGVIIDFTAPEASMATARAAARHGNAVVIGTTGFNEEQKAELAELARQIRLFWAPNMSVGVNVLLKVLPELVRLLGEKYDLEMVELHHNRKKDSPSGTALRLAECLAEARDWNLPDVACYHREGIIGERPQKEIGVQTIRGGDVVGVHTVYCLGPGERIEVTHQAHSRETFAQGALRAAAWLATQKPGKLYNMADIF</sequence>
<comment type="function">
    <text evidence="1">Catalyzes the conversion of 4-hydroxy-tetrahydrodipicolinate (HTPA) to tetrahydrodipicolinate.</text>
</comment>
<comment type="catalytic activity">
    <reaction evidence="1">
        <text>(S)-2,3,4,5-tetrahydrodipicolinate + NAD(+) + H2O = (2S,4S)-4-hydroxy-2,3,4,5-tetrahydrodipicolinate + NADH + H(+)</text>
        <dbReference type="Rhea" id="RHEA:35323"/>
        <dbReference type="ChEBI" id="CHEBI:15377"/>
        <dbReference type="ChEBI" id="CHEBI:15378"/>
        <dbReference type="ChEBI" id="CHEBI:16845"/>
        <dbReference type="ChEBI" id="CHEBI:57540"/>
        <dbReference type="ChEBI" id="CHEBI:57945"/>
        <dbReference type="ChEBI" id="CHEBI:67139"/>
        <dbReference type="EC" id="1.17.1.8"/>
    </reaction>
</comment>
<comment type="catalytic activity">
    <reaction evidence="1">
        <text>(S)-2,3,4,5-tetrahydrodipicolinate + NADP(+) + H2O = (2S,4S)-4-hydroxy-2,3,4,5-tetrahydrodipicolinate + NADPH + H(+)</text>
        <dbReference type="Rhea" id="RHEA:35331"/>
        <dbReference type="ChEBI" id="CHEBI:15377"/>
        <dbReference type="ChEBI" id="CHEBI:15378"/>
        <dbReference type="ChEBI" id="CHEBI:16845"/>
        <dbReference type="ChEBI" id="CHEBI:57783"/>
        <dbReference type="ChEBI" id="CHEBI:58349"/>
        <dbReference type="ChEBI" id="CHEBI:67139"/>
        <dbReference type="EC" id="1.17.1.8"/>
    </reaction>
</comment>
<comment type="pathway">
    <text evidence="1">Amino-acid biosynthesis; L-lysine biosynthesis via DAP pathway; (S)-tetrahydrodipicolinate from L-aspartate: step 4/4.</text>
</comment>
<comment type="subcellular location">
    <subcellularLocation>
        <location evidence="1">Cytoplasm</location>
    </subcellularLocation>
</comment>
<comment type="similarity">
    <text evidence="1">Belongs to the DapB family.</text>
</comment>
<comment type="caution">
    <text evidence="2">Was originally thought to be a dihydrodipicolinate reductase (DHDPR), catalyzing the conversion of dihydrodipicolinate to tetrahydrodipicolinate. However, it was shown in E.coli that the substrate of the enzymatic reaction is not dihydrodipicolinate (DHDP) but in fact (2S,4S)-4-hydroxy-2,3,4,5-tetrahydrodipicolinic acid (HTPA), the product released by the DapA-catalyzed reaction.</text>
</comment>
<reference key="1">
    <citation type="journal article" date="2009" name="Environ. Microbiol.">
        <title>Contribution of mobile genetic elements to Desulfovibrio vulgaris genome plasticity.</title>
        <authorList>
            <person name="Walker C.B."/>
            <person name="Stolyar S."/>
            <person name="Chivian D."/>
            <person name="Pinel N."/>
            <person name="Gabster J.A."/>
            <person name="Dehal P.S."/>
            <person name="He Z."/>
            <person name="Yang Z.K."/>
            <person name="Yen H.C."/>
            <person name="Zhou J."/>
            <person name="Wall J.D."/>
            <person name="Hazen T.C."/>
            <person name="Arkin A.P."/>
            <person name="Stahl D.A."/>
        </authorList>
    </citation>
    <scope>NUCLEOTIDE SEQUENCE [LARGE SCALE GENOMIC DNA]</scope>
    <source>
        <strain>DP4</strain>
    </source>
</reference>
<proteinExistence type="inferred from homology"/>
<organism>
    <name type="scientific">Nitratidesulfovibrio vulgaris (strain DP4)</name>
    <name type="common">Desulfovibrio vulgaris</name>
    <dbReference type="NCBI Taxonomy" id="391774"/>
    <lineage>
        <taxon>Bacteria</taxon>
        <taxon>Pseudomonadati</taxon>
        <taxon>Thermodesulfobacteriota</taxon>
        <taxon>Desulfovibrionia</taxon>
        <taxon>Desulfovibrionales</taxon>
        <taxon>Desulfovibrionaceae</taxon>
        <taxon>Nitratidesulfovibrio</taxon>
    </lineage>
</organism>
<gene>
    <name evidence="1" type="primary">dapB</name>
    <name type="ordered locus">Dvul_1525</name>
</gene>
<feature type="chain" id="PRO_1000008560" description="4-hydroxy-tetrahydrodipicolinate reductase">
    <location>
        <begin position="1"/>
        <end position="259"/>
    </location>
</feature>
<feature type="active site" description="Proton donor/acceptor" evidence="1">
    <location>
        <position position="149"/>
    </location>
</feature>
<feature type="active site" description="Proton donor" evidence="1">
    <location>
        <position position="153"/>
    </location>
</feature>
<feature type="binding site" evidence="1">
    <location>
        <begin position="9"/>
        <end position="14"/>
    </location>
    <ligand>
        <name>NAD(+)</name>
        <dbReference type="ChEBI" id="CHEBI:57540"/>
    </ligand>
</feature>
<feature type="binding site" evidence="1">
    <location>
        <position position="35"/>
    </location>
    <ligand>
        <name>NAD(+)</name>
        <dbReference type="ChEBI" id="CHEBI:57540"/>
    </ligand>
</feature>
<feature type="binding site" evidence="1">
    <location>
        <position position="36"/>
    </location>
    <ligand>
        <name>NADP(+)</name>
        <dbReference type="ChEBI" id="CHEBI:58349"/>
    </ligand>
</feature>
<feature type="binding site" evidence="1">
    <location>
        <begin position="92"/>
        <end position="94"/>
    </location>
    <ligand>
        <name>NAD(+)</name>
        <dbReference type="ChEBI" id="CHEBI:57540"/>
    </ligand>
</feature>
<feature type="binding site" evidence="1">
    <location>
        <begin position="116"/>
        <end position="119"/>
    </location>
    <ligand>
        <name>NAD(+)</name>
        <dbReference type="ChEBI" id="CHEBI:57540"/>
    </ligand>
</feature>
<feature type="binding site" evidence="1">
    <location>
        <position position="150"/>
    </location>
    <ligand>
        <name>(S)-2,3,4,5-tetrahydrodipicolinate</name>
        <dbReference type="ChEBI" id="CHEBI:16845"/>
    </ligand>
</feature>
<feature type="binding site" evidence="1">
    <location>
        <begin position="159"/>
        <end position="160"/>
    </location>
    <ligand>
        <name>(S)-2,3,4,5-tetrahydrodipicolinate</name>
        <dbReference type="ChEBI" id="CHEBI:16845"/>
    </ligand>
</feature>
<evidence type="ECO:0000255" key="1">
    <source>
        <dbReference type="HAMAP-Rule" id="MF_00102"/>
    </source>
</evidence>
<evidence type="ECO:0000305" key="2"/>
<accession>A1VDM6</accession>
<name>DAPB_NITV4</name>
<protein>
    <recommendedName>
        <fullName evidence="1">4-hydroxy-tetrahydrodipicolinate reductase</fullName>
        <shortName evidence="1">HTPA reductase</shortName>
        <ecNumber evidence="1">1.17.1.8</ecNumber>
    </recommendedName>
</protein>
<keyword id="KW-0028">Amino-acid biosynthesis</keyword>
<keyword id="KW-0963">Cytoplasm</keyword>
<keyword id="KW-0220">Diaminopimelate biosynthesis</keyword>
<keyword id="KW-0457">Lysine biosynthesis</keyword>
<keyword id="KW-0520">NAD</keyword>
<keyword id="KW-0521">NADP</keyword>
<keyword id="KW-0560">Oxidoreductase</keyword>